<accession>B1ICY0</accession>
<proteinExistence type="inferred from homology"/>
<protein>
    <recommendedName>
        <fullName evidence="1">Phosphoglucosamine mutase</fullName>
        <ecNumber evidence="1">5.4.2.10</ecNumber>
    </recommendedName>
</protein>
<gene>
    <name evidence="1" type="primary">glmM</name>
    <name type="ordered locus">SPH_1674</name>
</gene>
<comment type="function">
    <text evidence="1">Catalyzes the conversion of glucosamine-6-phosphate to glucosamine-1-phosphate.</text>
</comment>
<comment type="catalytic activity">
    <reaction evidence="1">
        <text>alpha-D-glucosamine 1-phosphate = D-glucosamine 6-phosphate</text>
        <dbReference type="Rhea" id="RHEA:23424"/>
        <dbReference type="ChEBI" id="CHEBI:58516"/>
        <dbReference type="ChEBI" id="CHEBI:58725"/>
        <dbReference type="EC" id="5.4.2.10"/>
    </reaction>
</comment>
<comment type="cofactor">
    <cofactor evidence="1">
        <name>Mg(2+)</name>
        <dbReference type="ChEBI" id="CHEBI:18420"/>
    </cofactor>
    <text evidence="1">Binds 1 Mg(2+) ion per subunit.</text>
</comment>
<comment type="PTM">
    <text evidence="1">Activated by phosphorylation.</text>
</comment>
<comment type="similarity">
    <text evidence="1">Belongs to the phosphohexose mutase family.</text>
</comment>
<organism>
    <name type="scientific">Streptococcus pneumoniae (strain Hungary19A-6)</name>
    <dbReference type="NCBI Taxonomy" id="487214"/>
    <lineage>
        <taxon>Bacteria</taxon>
        <taxon>Bacillati</taxon>
        <taxon>Bacillota</taxon>
        <taxon>Bacilli</taxon>
        <taxon>Lactobacillales</taxon>
        <taxon>Streptococcaceae</taxon>
        <taxon>Streptococcus</taxon>
    </lineage>
</organism>
<reference key="1">
    <citation type="journal article" date="2010" name="Genome Biol.">
        <title>Structure and dynamics of the pan-genome of Streptococcus pneumoniae and closely related species.</title>
        <authorList>
            <person name="Donati C."/>
            <person name="Hiller N.L."/>
            <person name="Tettelin H."/>
            <person name="Muzzi A."/>
            <person name="Croucher N.J."/>
            <person name="Angiuoli S.V."/>
            <person name="Oggioni M."/>
            <person name="Dunning Hotopp J.C."/>
            <person name="Hu F.Z."/>
            <person name="Riley D.R."/>
            <person name="Covacci A."/>
            <person name="Mitchell T.J."/>
            <person name="Bentley S.D."/>
            <person name="Kilian M."/>
            <person name="Ehrlich G.D."/>
            <person name="Rappuoli R."/>
            <person name="Moxon E.R."/>
            <person name="Masignani V."/>
        </authorList>
    </citation>
    <scope>NUCLEOTIDE SEQUENCE [LARGE SCALE GENOMIC DNA]</scope>
    <source>
        <strain>Hungary19A-6</strain>
    </source>
</reference>
<name>GLMM_STRPI</name>
<feature type="chain" id="PRO_1000201147" description="Phosphoglucosamine mutase">
    <location>
        <begin position="1"/>
        <end position="450"/>
    </location>
</feature>
<feature type="active site" description="Phosphoserine intermediate" evidence="1">
    <location>
        <position position="101"/>
    </location>
</feature>
<feature type="binding site" description="via phosphate group" evidence="1">
    <location>
        <position position="101"/>
    </location>
    <ligand>
        <name>Mg(2+)</name>
        <dbReference type="ChEBI" id="CHEBI:18420"/>
    </ligand>
</feature>
<feature type="binding site" evidence="1">
    <location>
        <position position="240"/>
    </location>
    <ligand>
        <name>Mg(2+)</name>
        <dbReference type="ChEBI" id="CHEBI:18420"/>
    </ligand>
</feature>
<feature type="binding site" evidence="1">
    <location>
        <position position="242"/>
    </location>
    <ligand>
        <name>Mg(2+)</name>
        <dbReference type="ChEBI" id="CHEBI:18420"/>
    </ligand>
</feature>
<feature type="binding site" evidence="1">
    <location>
        <position position="244"/>
    </location>
    <ligand>
        <name>Mg(2+)</name>
        <dbReference type="ChEBI" id="CHEBI:18420"/>
    </ligand>
</feature>
<feature type="modified residue" description="Phosphoserine" evidence="1">
    <location>
        <position position="101"/>
    </location>
</feature>
<dbReference type="EC" id="5.4.2.10" evidence="1"/>
<dbReference type="EMBL" id="CP000936">
    <property type="protein sequence ID" value="ACA37552.1"/>
    <property type="molecule type" value="Genomic_DNA"/>
</dbReference>
<dbReference type="RefSeq" id="WP_000521413.1">
    <property type="nucleotide sequence ID" value="NC_010380.1"/>
</dbReference>
<dbReference type="SMR" id="B1ICY0"/>
<dbReference type="KEGG" id="spv:SPH_1674"/>
<dbReference type="HOGENOM" id="CLU_016950_7_0_9"/>
<dbReference type="Proteomes" id="UP000002163">
    <property type="component" value="Chromosome"/>
</dbReference>
<dbReference type="GO" id="GO:0005829">
    <property type="term" value="C:cytosol"/>
    <property type="evidence" value="ECO:0007669"/>
    <property type="project" value="TreeGrafter"/>
</dbReference>
<dbReference type="GO" id="GO:0000287">
    <property type="term" value="F:magnesium ion binding"/>
    <property type="evidence" value="ECO:0007669"/>
    <property type="project" value="UniProtKB-UniRule"/>
</dbReference>
<dbReference type="GO" id="GO:0008966">
    <property type="term" value="F:phosphoglucosamine mutase activity"/>
    <property type="evidence" value="ECO:0007669"/>
    <property type="project" value="UniProtKB-UniRule"/>
</dbReference>
<dbReference type="GO" id="GO:0004615">
    <property type="term" value="F:phosphomannomutase activity"/>
    <property type="evidence" value="ECO:0007669"/>
    <property type="project" value="TreeGrafter"/>
</dbReference>
<dbReference type="GO" id="GO:0005975">
    <property type="term" value="P:carbohydrate metabolic process"/>
    <property type="evidence" value="ECO:0007669"/>
    <property type="project" value="InterPro"/>
</dbReference>
<dbReference type="GO" id="GO:0009252">
    <property type="term" value="P:peptidoglycan biosynthetic process"/>
    <property type="evidence" value="ECO:0007669"/>
    <property type="project" value="TreeGrafter"/>
</dbReference>
<dbReference type="GO" id="GO:0006048">
    <property type="term" value="P:UDP-N-acetylglucosamine biosynthetic process"/>
    <property type="evidence" value="ECO:0007669"/>
    <property type="project" value="TreeGrafter"/>
</dbReference>
<dbReference type="CDD" id="cd05802">
    <property type="entry name" value="GlmM"/>
    <property type="match status" value="1"/>
</dbReference>
<dbReference type="FunFam" id="3.30.310.50:FF:000001">
    <property type="entry name" value="Phosphoglucosamine mutase"/>
    <property type="match status" value="1"/>
</dbReference>
<dbReference type="FunFam" id="3.40.120.10:FF:000001">
    <property type="entry name" value="Phosphoglucosamine mutase"/>
    <property type="match status" value="1"/>
</dbReference>
<dbReference type="FunFam" id="3.40.120.10:FF:000002">
    <property type="entry name" value="Phosphoglucosamine mutase"/>
    <property type="match status" value="1"/>
</dbReference>
<dbReference type="Gene3D" id="3.40.120.10">
    <property type="entry name" value="Alpha-D-Glucose-1,6-Bisphosphate, subunit A, domain 3"/>
    <property type="match status" value="3"/>
</dbReference>
<dbReference type="Gene3D" id="3.30.310.50">
    <property type="entry name" value="Alpha-D-phosphohexomutase, C-terminal domain"/>
    <property type="match status" value="1"/>
</dbReference>
<dbReference type="HAMAP" id="MF_01554_B">
    <property type="entry name" value="GlmM_B"/>
    <property type="match status" value="1"/>
</dbReference>
<dbReference type="InterPro" id="IPR005844">
    <property type="entry name" value="A-D-PHexomutase_a/b/a-I"/>
</dbReference>
<dbReference type="InterPro" id="IPR016055">
    <property type="entry name" value="A-D-PHexomutase_a/b/a-I/II/III"/>
</dbReference>
<dbReference type="InterPro" id="IPR005845">
    <property type="entry name" value="A-D-PHexomutase_a/b/a-II"/>
</dbReference>
<dbReference type="InterPro" id="IPR005846">
    <property type="entry name" value="A-D-PHexomutase_a/b/a-III"/>
</dbReference>
<dbReference type="InterPro" id="IPR005843">
    <property type="entry name" value="A-D-PHexomutase_C"/>
</dbReference>
<dbReference type="InterPro" id="IPR036900">
    <property type="entry name" value="A-D-PHexomutase_C_sf"/>
</dbReference>
<dbReference type="InterPro" id="IPR016066">
    <property type="entry name" value="A-D-PHexomutase_CS"/>
</dbReference>
<dbReference type="InterPro" id="IPR005841">
    <property type="entry name" value="Alpha-D-phosphohexomutase_SF"/>
</dbReference>
<dbReference type="InterPro" id="IPR006352">
    <property type="entry name" value="GlmM_bact"/>
</dbReference>
<dbReference type="InterPro" id="IPR050060">
    <property type="entry name" value="Phosphoglucosamine_mutase"/>
</dbReference>
<dbReference type="NCBIfam" id="TIGR01455">
    <property type="entry name" value="glmM"/>
    <property type="match status" value="1"/>
</dbReference>
<dbReference type="PANTHER" id="PTHR42946:SF1">
    <property type="entry name" value="PHOSPHOGLUCOMUTASE (ALPHA-D-GLUCOSE-1,6-BISPHOSPHATE-DEPENDENT)"/>
    <property type="match status" value="1"/>
</dbReference>
<dbReference type="PANTHER" id="PTHR42946">
    <property type="entry name" value="PHOSPHOHEXOSE MUTASE"/>
    <property type="match status" value="1"/>
</dbReference>
<dbReference type="Pfam" id="PF02878">
    <property type="entry name" value="PGM_PMM_I"/>
    <property type="match status" value="1"/>
</dbReference>
<dbReference type="Pfam" id="PF02879">
    <property type="entry name" value="PGM_PMM_II"/>
    <property type="match status" value="1"/>
</dbReference>
<dbReference type="Pfam" id="PF02880">
    <property type="entry name" value="PGM_PMM_III"/>
    <property type="match status" value="1"/>
</dbReference>
<dbReference type="Pfam" id="PF00408">
    <property type="entry name" value="PGM_PMM_IV"/>
    <property type="match status" value="1"/>
</dbReference>
<dbReference type="PRINTS" id="PR00509">
    <property type="entry name" value="PGMPMM"/>
</dbReference>
<dbReference type="SUPFAM" id="SSF55957">
    <property type="entry name" value="Phosphoglucomutase, C-terminal domain"/>
    <property type="match status" value="1"/>
</dbReference>
<dbReference type="SUPFAM" id="SSF53738">
    <property type="entry name" value="Phosphoglucomutase, first 3 domains"/>
    <property type="match status" value="3"/>
</dbReference>
<dbReference type="PROSITE" id="PS00710">
    <property type="entry name" value="PGM_PMM"/>
    <property type="match status" value="1"/>
</dbReference>
<sequence length="450" mass="48152">MGKYFGTDGVRGEANLELTPELAFKLGRFGGYVLSQHETEAPKVFVGRDTRISGEMLESALVAGLLSVGIHVYKLGVLATPAVAYLVETEGASAGVMISASHNPALDNGIKFFGGDGFKLDDEKEAEIEALLDAEEDTLPRPSAEGLGILVDYPEGLRKYEGYLVSTGTPLDGMKVALDTANGAASTSARQIFADLGAQLTVIGETPDGLNINLNVGSTHPEALQEVVKESGSAIGLAFDGDSDRLIAVDENGDIVDGDKIMYIIGKYLSEKGQLAQNTIVTTVMSNLGFHKALNREGINKAVTAVGDRYVVEEMRKSGYNLGGEQSGHVILMDYNTTGDGQLSAVQLTKIMKETGKSLSELAAEVTIYPQKLVNIRVENVMKEKAMEVPAIKVIIEKMEEEMAGNGRILVRPSGTEPLLRVMAEAPTTEEVDYYVDTITDVVRAEIGID</sequence>
<evidence type="ECO:0000255" key="1">
    <source>
        <dbReference type="HAMAP-Rule" id="MF_01554"/>
    </source>
</evidence>
<keyword id="KW-0413">Isomerase</keyword>
<keyword id="KW-0460">Magnesium</keyword>
<keyword id="KW-0479">Metal-binding</keyword>
<keyword id="KW-0597">Phosphoprotein</keyword>